<sequence length="295" mass="34147">MIKVFNRKEKIYDIEKVAGDNYLKWIYSSPVGLNFLELMIKKKFFSKLYGKYCDSKHSAKKVSKFIDDFNINEKEFTLKKSDFKSFNDFFYRKLNNDARPIINDENILISPADGRLFAYENIDIHNLIQVKGLTYSLDELLKNIELAEKYIGGTCLLFRLAPVDYHRFHFIDDGICEEAVKISGSYYSVNPIALEKVPKLFCENKREYSIFHSKHFGDVLYVDVGATCVGSIIQTYTPNEYVVKGDEKGYFKFGGSTIILFFEKDKIIVDKDIVEQTQKGFECKVLMGEKIGTKL</sequence>
<reference key="1">
    <citation type="journal article" date="2006" name="Nat. Biotechnol.">
        <title>The genome and transcriptomes of the anti-tumor agent Clostridium novyi-NT.</title>
        <authorList>
            <person name="Bettegowda C."/>
            <person name="Huang X."/>
            <person name="Lin J."/>
            <person name="Cheong I."/>
            <person name="Kohli M."/>
            <person name="Szabo S.A."/>
            <person name="Zhang X."/>
            <person name="Diaz L.A. Jr."/>
            <person name="Velculescu V.E."/>
            <person name="Parmigiani G."/>
            <person name="Kinzler K.W."/>
            <person name="Vogelstein B."/>
            <person name="Zhou S."/>
        </authorList>
    </citation>
    <scope>NUCLEOTIDE SEQUENCE [LARGE SCALE GENOMIC DNA]</scope>
    <source>
        <strain>NT</strain>
    </source>
</reference>
<proteinExistence type="inferred from homology"/>
<organism>
    <name type="scientific">Clostridium novyi (strain NT)</name>
    <dbReference type="NCBI Taxonomy" id="386415"/>
    <lineage>
        <taxon>Bacteria</taxon>
        <taxon>Bacillati</taxon>
        <taxon>Bacillota</taxon>
        <taxon>Clostridia</taxon>
        <taxon>Eubacteriales</taxon>
        <taxon>Clostridiaceae</taxon>
        <taxon>Clostridium</taxon>
    </lineage>
</organism>
<comment type="function">
    <text evidence="1">Catalyzes the formation of phosphatidylethanolamine (PtdEtn) from phosphatidylserine (PtdSer).</text>
</comment>
<comment type="catalytic activity">
    <reaction evidence="1">
        <text>a 1,2-diacyl-sn-glycero-3-phospho-L-serine + H(+) = a 1,2-diacyl-sn-glycero-3-phosphoethanolamine + CO2</text>
        <dbReference type="Rhea" id="RHEA:20828"/>
        <dbReference type="ChEBI" id="CHEBI:15378"/>
        <dbReference type="ChEBI" id="CHEBI:16526"/>
        <dbReference type="ChEBI" id="CHEBI:57262"/>
        <dbReference type="ChEBI" id="CHEBI:64612"/>
        <dbReference type="EC" id="4.1.1.65"/>
    </reaction>
</comment>
<comment type="cofactor">
    <cofactor evidence="1">
        <name>pyruvate</name>
        <dbReference type="ChEBI" id="CHEBI:15361"/>
    </cofactor>
    <text evidence="1">Binds 1 pyruvoyl group covalently per subunit.</text>
</comment>
<comment type="pathway">
    <text evidence="1">Phospholipid metabolism; phosphatidylethanolamine biosynthesis; phosphatidylethanolamine from CDP-diacylglycerol: step 2/2.</text>
</comment>
<comment type="subunit">
    <text evidence="1">Heterodimer of a large membrane-associated beta subunit and a small pyruvoyl-containing alpha subunit.</text>
</comment>
<comment type="subcellular location">
    <subcellularLocation>
        <location evidence="1">Cell membrane</location>
        <topology evidence="1">Peripheral membrane protein</topology>
    </subcellularLocation>
</comment>
<comment type="PTM">
    <text evidence="1">Is synthesized initially as an inactive proenzyme. Formation of the active enzyme involves a self-maturation process in which the active site pyruvoyl group is generated from an internal serine residue via an autocatalytic post-translational modification. Two non-identical subunits are generated from the proenzyme in this reaction, and the pyruvate is formed at the N-terminus of the alpha chain, which is derived from the carboxyl end of the proenzyme. The autoendoproteolytic cleavage occurs by a canonical serine protease mechanism, in which the side chain hydroxyl group of the serine supplies its oxygen atom to form the C-terminus of the beta chain, while the remainder of the serine residue undergoes an oxidative deamination to produce ammonia and the pyruvoyl prosthetic group on the alpha chain. During this reaction, the Ser that is part of the protease active site of the proenzyme becomes the pyruvoyl prosthetic group, which constitutes an essential element of the active site of the mature decarboxylase.</text>
</comment>
<comment type="similarity">
    <text evidence="1">Belongs to the phosphatidylserine decarboxylase family. PSD-B subfamily. Prokaryotic type II sub-subfamily.</text>
</comment>
<keyword id="KW-1003">Cell membrane</keyword>
<keyword id="KW-0210">Decarboxylase</keyword>
<keyword id="KW-0444">Lipid biosynthesis</keyword>
<keyword id="KW-0443">Lipid metabolism</keyword>
<keyword id="KW-0456">Lyase</keyword>
<keyword id="KW-0472">Membrane</keyword>
<keyword id="KW-0594">Phospholipid biosynthesis</keyword>
<keyword id="KW-1208">Phospholipid metabolism</keyword>
<keyword id="KW-0670">Pyruvate</keyword>
<keyword id="KW-1185">Reference proteome</keyword>
<keyword id="KW-0865">Zymogen</keyword>
<dbReference type="EC" id="4.1.1.65" evidence="1"/>
<dbReference type="EMBL" id="CP000382">
    <property type="protein sequence ID" value="ABK62661.1"/>
    <property type="molecule type" value="Genomic_DNA"/>
</dbReference>
<dbReference type="RefSeq" id="WP_011723243.1">
    <property type="nucleotide sequence ID" value="NC_008593.1"/>
</dbReference>
<dbReference type="SMR" id="A0Q3R9"/>
<dbReference type="STRING" id="386415.NT01CX_0831"/>
<dbReference type="KEGG" id="cno:NT01CX_0831"/>
<dbReference type="PATRIC" id="fig|386415.7.peg.2307"/>
<dbReference type="eggNOG" id="COG0688">
    <property type="taxonomic scope" value="Bacteria"/>
</dbReference>
<dbReference type="HOGENOM" id="CLU_029061_2_2_9"/>
<dbReference type="UniPathway" id="UPA00558">
    <property type="reaction ID" value="UER00616"/>
</dbReference>
<dbReference type="Proteomes" id="UP000008220">
    <property type="component" value="Chromosome"/>
</dbReference>
<dbReference type="GO" id="GO:0005886">
    <property type="term" value="C:plasma membrane"/>
    <property type="evidence" value="ECO:0007669"/>
    <property type="project" value="UniProtKB-SubCell"/>
</dbReference>
<dbReference type="GO" id="GO:0004609">
    <property type="term" value="F:phosphatidylserine decarboxylase activity"/>
    <property type="evidence" value="ECO:0007669"/>
    <property type="project" value="UniProtKB-UniRule"/>
</dbReference>
<dbReference type="GO" id="GO:0006646">
    <property type="term" value="P:phosphatidylethanolamine biosynthetic process"/>
    <property type="evidence" value="ECO:0007669"/>
    <property type="project" value="UniProtKB-UniRule"/>
</dbReference>
<dbReference type="HAMAP" id="MF_00663">
    <property type="entry name" value="PS_decarb_PSD_B_type2"/>
    <property type="match status" value="1"/>
</dbReference>
<dbReference type="InterPro" id="IPR003817">
    <property type="entry name" value="PS_Dcarbxylase"/>
</dbReference>
<dbReference type="InterPro" id="IPR033177">
    <property type="entry name" value="PSD-B"/>
</dbReference>
<dbReference type="InterPro" id="IPR033179">
    <property type="entry name" value="PSD_type2_pro"/>
</dbReference>
<dbReference type="NCBIfam" id="NF001941">
    <property type="entry name" value="PRK00723.1"/>
    <property type="match status" value="1"/>
</dbReference>
<dbReference type="NCBIfam" id="TIGR00163">
    <property type="entry name" value="PS_decarb"/>
    <property type="match status" value="1"/>
</dbReference>
<dbReference type="PANTHER" id="PTHR10067">
    <property type="entry name" value="PHOSPHATIDYLSERINE DECARBOXYLASE"/>
    <property type="match status" value="1"/>
</dbReference>
<dbReference type="PANTHER" id="PTHR10067:SF17">
    <property type="entry name" value="PHOSPHATIDYLSERINE DECARBOXYLASE PROENZYME 2"/>
    <property type="match status" value="1"/>
</dbReference>
<dbReference type="Pfam" id="PF02666">
    <property type="entry name" value="PS_Dcarbxylase"/>
    <property type="match status" value="1"/>
</dbReference>
<protein>
    <recommendedName>
        <fullName evidence="1">Phosphatidylserine decarboxylase proenzyme</fullName>
        <ecNumber evidence="1">4.1.1.65</ecNumber>
    </recommendedName>
    <component>
        <recommendedName>
            <fullName evidence="1">Phosphatidylserine decarboxylase alpha chain</fullName>
        </recommendedName>
    </component>
    <component>
        <recommendedName>
            <fullName evidence="1">Phosphatidylserine decarboxylase beta chain</fullName>
        </recommendedName>
    </component>
</protein>
<feature type="chain" id="PRO_1000026614" description="Phosphatidylserine decarboxylase beta chain" evidence="1">
    <location>
        <begin position="1"/>
        <end position="255"/>
    </location>
</feature>
<feature type="chain" id="PRO_1000026615" description="Phosphatidylserine decarboxylase alpha chain" evidence="1">
    <location>
        <begin position="256"/>
        <end position="295"/>
    </location>
</feature>
<feature type="active site" description="Charge relay system; for autoendoproteolytic cleavage activity" evidence="1">
    <location>
        <position position="113"/>
    </location>
</feature>
<feature type="active site" description="Charge relay system; for autoendoproteolytic cleavage activity" evidence="1">
    <location>
        <position position="169"/>
    </location>
</feature>
<feature type="active site" description="Charge relay system; for autoendoproteolytic cleavage activity" evidence="1">
    <location>
        <position position="256"/>
    </location>
</feature>
<feature type="active site" description="Schiff-base intermediate with substrate; via pyruvic acid; for decarboxylase activity" evidence="1">
    <location>
        <position position="256"/>
    </location>
</feature>
<feature type="site" description="Cleavage (non-hydrolytic); by autocatalysis" evidence="1">
    <location>
        <begin position="255"/>
        <end position="256"/>
    </location>
</feature>
<feature type="modified residue" description="Pyruvic acid (Ser); by autocatalysis" evidence="1">
    <location>
        <position position="256"/>
    </location>
</feature>
<evidence type="ECO:0000255" key="1">
    <source>
        <dbReference type="HAMAP-Rule" id="MF_00663"/>
    </source>
</evidence>
<name>PSD_CLONN</name>
<accession>A0Q3R9</accession>
<gene>
    <name evidence="1" type="primary">psd</name>
    <name type="ordered locus">NT01CX_0831</name>
</gene>